<proteinExistence type="evidence at transcript level"/>
<keyword id="KW-0025">Alternative splicing</keyword>
<keyword id="KW-0165">Cleavage on pair of basic residues</keyword>
<keyword id="KW-0217">Developmental protein</keyword>
<keyword id="KW-1015">Disulfide bond</keyword>
<keyword id="KW-0325">Glycoprotein</keyword>
<keyword id="KW-0339">Growth factor</keyword>
<keyword id="KW-0497">Mitogen</keyword>
<keyword id="KW-1185">Reference proteome</keyword>
<keyword id="KW-0964">Secreted</keyword>
<keyword id="KW-0732">Signal</keyword>
<protein>
    <recommendedName>
        <fullName>Platelet-derived growth factor subunit A</fullName>
        <shortName>PDGF subunit A</shortName>
    </recommendedName>
    <alternativeName>
        <fullName>PDGF-1</fullName>
    </alternativeName>
    <alternativeName>
        <fullName>Platelet-derived growth factor A chain</fullName>
    </alternativeName>
    <alternativeName>
        <fullName>Platelet-derived growth factor alpha polypeptide</fullName>
    </alternativeName>
</protein>
<name>PDGFA_MOUSE</name>
<comment type="function">
    <text evidence="4 5 6 9 10 11 12">Growth factor that plays an essential role in the regulation of embryonic development, cell proliferation, cell migration, survival and chemotaxis. Potent mitogen for cells of mesenchymal origin. Required for normal lung alveolar septum formation during embryogenesis, normal development of the gastrointestinal tract, normal development of Leydig cells and spermatogenesis. Required for normal oligodendrocyte development and normal myelination in the spinal cord and cerebellum. Plays an important role in wound healing. Signaling is modulated by the formation of heterodimers with PDGFB.</text>
</comment>
<comment type="subunit">
    <text evidence="1">Homodimer; antiparallel disulfide-linked dimer. Heterodimer with PDGFB; antiparallel disulfide-linked dimer. The PDGFA homodimer interacts with PDGFRA homodimers, and with heterodimers formed by PDGFRA and PDGFRB. The heterodimer composed of PDGFA and PDGFB interacts with PDGFRA homodimers, and with heterodimers formed by PDGFRA and PDGFRB. Interacts with CSPG4 (By similarity).</text>
</comment>
<comment type="subcellular location">
    <subcellularLocation>
        <location>Secreted</location>
    </subcellularLocation>
    <text>Released by platelets upon wounding.</text>
</comment>
<comment type="alternative products">
    <event type="alternative splicing"/>
    <isoform>
        <id>P20033-1</id>
        <name>Long</name>
        <sequence type="displayed"/>
    </isoform>
    <isoform>
        <id>P20033-2</id>
        <name>Short</name>
        <sequence type="described" ref="VSP_004604 VSP_004605"/>
    </isoform>
</comment>
<comment type="tissue specificity">
    <text evidence="7">Expression primarily localized in papillary regions with presumable expression in tubular cells comprising the loop of Henle. In the renal cortex, a widespread expression seen in the vascular smooth muscle cells and is barely detectable in interstitial cells.</text>
</comment>
<comment type="domain">
    <text>The long form contains a basic insert which acts as a cell retention signal.</text>
</comment>
<comment type="disruption phenotype">
    <text evidence="4 5 6 8 10 11 12">Lethal, due to defects in cell proliferation and migration, leading to defects in the development of the embryonic lung, gastrointestinal tract, oligodendrocytes and Leydig cells.</text>
</comment>
<comment type="similarity">
    <text evidence="15">Belongs to the PDGF/VEGF growth factor family.</text>
</comment>
<evidence type="ECO:0000250" key="1"/>
<evidence type="ECO:0000255" key="2"/>
<evidence type="ECO:0000256" key="3">
    <source>
        <dbReference type="SAM" id="MobiDB-lite"/>
    </source>
</evidence>
<evidence type="ECO:0000269" key="4">
    <source>
    </source>
</evidence>
<evidence type="ECO:0000269" key="5">
    <source>
    </source>
</evidence>
<evidence type="ECO:0000269" key="6">
    <source>
    </source>
</evidence>
<evidence type="ECO:0000269" key="7">
    <source>
    </source>
</evidence>
<evidence type="ECO:0000269" key="8">
    <source>
    </source>
</evidence>
<evidence type="ECO:0000269" key="9">
    <source>
    </source>
</evidence>
<evidence type="ECO:0000269" key="10">
    <source>
    </source>
</evidence>
<evidence type="ECO:0000269" key="11">
    <source>
    </source>
</evidence>
<evidence type="ECO:0000269" key="12">
    <source>
    </source>
</evidence>
<evidence type="ECO:0000303" key="13">
    <source>
    </source>
</evidence>
<evidence type="ECO:0000303" key="14">
    <source>
    </source>
</evidence>
<evidence type="ECO:0000305" key="15"/>
<organism>
    <name type="scientific">Mus musculus</name>
    <name type="common">Mouse</name>
    <dbReference type="NCBI Taxonomy" id="10090"/>
    <lineage>
        <taxon>Eukaryota</taxon>
        <taxon>Metazoa</taxon>
        <taxon>Chordata</taxon>
        <taxon>Craniata</taxon>
        <taxon>Vertebrata</taxon>
        <taxon>Euteleostomi</taxon>
        <taxon>Mammalia</taxon>
        <taxon>Eutheria</taxon>
        <taxon>Euarchontoglires</taxon>
        <taxon>Glires</taxon>
        <taxon>Rodentia</taxon>
        <taxon>Myomorpha</taxon>
        <taxon>Muroidea</taxon>
        <taxon>Muridae</taxon>
        <taxon>Murinae</taxon>
        <taxon>Mus</taxon>
        <taxon>Mus</taxon>
    </lineage>
</organism>
<reference key="1">
    <citation type="journal article" date="1992" name="Growth Factors">
        <title>Characterization of the mouse PDGF A-chain gene. Evolutionary conservation of gene structure, nucleotide sequence and alternative splicing.</title>
        <authorList>
            <person name="Rorsman F."/>
            <person name="Betsholtz C."/>
        </authorList>
    </citation>
    <scope>NUCLEOTIDE SEQUENCE [GENOMIC DNA / MRNA] (ISOFORMS LONG AND SHORT)</scope>
    <source>
        <strain>BALB/cJ</strain>
    </source>
</reference>
<reference key="2">
    <citation type="journal article" date="1990" name="Dev. Biol.">
        <title>Selective expression of PDGF A and its receptor during early mouse embryogenesis.</title>
        <authorList>
            <person name="Mercola M."/>
            <person name="Wang C."/>
            <person name="Kelly J."/>
            <person name="Brownlee C."/>
            <person name="Jackson-Grusby L."/>
            <person name="Stiles C."/>
            <person name="Bowen-Pope D.F."/>
        </authorList>
    </citation>
    <scope>NUCLEOTIDE SEQUENCE [MRNA] (ISOFORM SHORT)</scope>
    <source>
        <strain>129/Sv</strain>
        <tissue>Teratocarcinoma</tissue>
    </source>
</reference>
<reference key="3">
    <citation type="journal article" date="2009" name="PLoS Biol.">
        <title>Lineage-specific biology revealed by a finished genome assembly of the mouse.</title>
        <authorList>
            <person name="Church D.M."/>
            <person name="Goodstadt L."/>
            <person name="Hillier L.W."/>
            <person name="Zody M.C."/>
            <person name="Goldstein S."/>
            <person name="She X."/>
            <person name="Bult C.J."/>
            <person name="Agarwala R."/>
            <person name="Cherry J.L."/>
            <person name="DiCuccio M."/>
            <person name="Hlavina W."/>
            <person name="Kapustin Y."/>
            <person name="Meric P."/>
            <person name="Maglott D."/>
            <person name="Birtle Z."/>
            <person name="Marques A.C."/>
            <person name="Graves T."/>
            <person name="Zhou S."/>
            <person name="Teague B."/>
            <person name="Potamousis K."/>
            <person name="Churas C."/>
            <person name="Place M."/>
            <person name="Herschleb J."/>
            <person name="Runnheim R."/>
            <person name="Forrest D."/>
            <person name="Amos-Landgraf J."/>
            <person name="Schwartz D.C."/>
            <person name="Cheng Z."/>
            <person name="Lindblad-Toh K."/>
            <person name="Eichler E.E."/>
            <person name="Ponting C.P."/>
        </authorList>
    </citation>
    <scope>NUCLEOTIDE SEQUENCE [LARGE SCALE GENOMIC DNA]</scope>
    <source>
        <strain>C57BL/6J</strain>
    </source>
</reference>
<reference key="4">
    <citation type="journal article" date="1996" name="Cell">
        <title>PDGF-A signaling is a critical event in lung alveolar myofibroblast development and alveogenesis.</title>
        <authorList>
            <person name="Bostrom H."/>
            <person name="Willetts K."/>
            <person name="Pekny M."/>
            <person name="Leveen P."/>
            <person name="Lindahl P."/>
            <person name="Hedstrand H."/>
            <person name="Pekna M."/>
            <person name="Hellstrom M."/>
            <person name="Gebre-Medhin S."/>
            <person name="Schalling M."/>
            <person name="Nilsson M."/>
            <person name="Kurland S."/>
            <person name="Tornell J."/>
            <person name="Heath J.K."/>
            <person name="Betsholtz C."/>
        </authorList>
    </citation>
    <scope>DISRUPTION PHENOTYPE</scope>
    <scope>FUNCTION</scope>
</reference>
<reference key="5">
    <citation type="journal article" date="1997" name="Development">
        <title>Alveogenesis failure in PDGF-A-deficient mice is coupled to lack of distal spreading of alveolar smooth muscle cell progenitors during lung development.</title>
        <authorList>
            <person name="Lindahl P."/>
            <person name="Karlsson L."/>
            <person name="Hellstrom M."/>
            <person name="Gebre-Medhin S."/>
            <person name="Willetts K."/>
            <person name="Heath J.K."/>
            <person name="Betsholtz C."/>
        </authorList>
    </citation>
    <scope>DISRUPTION PHENOTYPE</scope>
    <scope>FUNCTION</scope>
</reference>
<reference key="6">
    <citation type="journal article" date="1999" name="Development">
        <title>Defective oligodendrocyte development and severe hypomyelination in PDGF-A knockout mice.</title>
        <authorList>
            <person name="Fruttiger M."/>
            <person name="Karlsson L."/>
            <person name="Hall A.C."/>
            <person name="Abramsson A."/>
            <person name="Calver A.R."/>
            <person name="Bostrom H."/>
            <person name="Willetts K."/>
            <person name="Bertold C.H."/>
            <person name="Heath J.K."/>
            <person name="Betsholtz C."/>
            <person name="Richardson W.D."/>
        </authorList>
    </citation>
    <scope>DISRUPTION PHENOTYPE</scope>
    <scope>FUNCTION</scope>
</reference>
<reference key="7">
    <citation type="journal article" date="2000" name="Development">
        <title>Abnormal gastrointestinal development in PDGF-A and PDGFR-(alpha) deficient mice implicates a novel mesenchymal structure with putative instructive properties in villus morphogenesis.</title>
        <authorList>
            <person name="Karlsson L."/>
            <person name="Lindahl P."/>
            <person name="Heath J.K."/>
            <person name="Betsholtz C."/>
        </authorList>
    </citation>
    <scope>DISRUPTION PHENOTYPE</scope>
    <scope>FUNCTION</scope>
</reference>
<reference key="8">
    <citation type="journal article" date="2000" name="J. Cell Biol.">
        <title>Leydig cell loss and spermatogenic arrest in platelet-derived growth factor (PDGF)-A-deficient mice.</title>
        <authorList>
            <person name="Gnessi L."/>
            <person name="Basciani S."/>
            <person name="Mariani S."/>
            <person name="Arizzi M."/>
            <person name="Spera G."/>
            <person name="Wang C."/>
            <person name="Bondjers C."/>
            <person name="Karlsson L."/>
            <person name="Betsholtz C."/>
        </authorList>
    </citation>
    <scope>DISRUPTION PHENOTYPE</scope>
    <scope>FUNCTION</scope>
</reference>
<reference key="9">
    <citation type="journal article" date="2002" name="Dev. Dyn.">
        <title>PDGF-A/PDGF alpha-receptor signaling is required for lung growth and the formation of alveoli but not for early lung branching morphogenesis.</title>
        <authorList>
            <person name="Bostrom H."/>
            <person name="Gritli-Linde A."/>
            <person name="Betsholtz C."/>
        </authorList>
    </citation>
    <scope>DISRUPTION PHENOTYPE</scope>
    <scope>FUNCTION</scope>
</reference>
<reference key="10">
    <citation type="journal article" date="2003" name="J. Am. Soc. Nephrol.">
        <title>Obstructive uropathy in mice and humans: potential role for PDGF-D in the progression of tubulointerstitial injury.</title>
        <authorList>
            <person name="Taneda S."/>
            <person name="Hudkins K.L."/>
            <person name="Topouzis S."/>
            <person name="Gilbertson D.G."/>
            <person name="Ophascharoensuk V."/>
            <person name="Truong L."/>
            <person name="Johnson R.J."/>
            <person name="Alpers C.E."/>
        </authorList>
    </citation>
    <scope>TISSUE SPECIFICITY</scope>
</reference>
<reference key="11">
    <citation type="journal article" date="2004" name="Cytokine Growth Factor Rev.">
        <title>PDGF signaling in cells and mice.</title>
        <authorList>
            <person name="Tallquist M."/>
            <person name="Kazlauskas A."/>
        </authorList>
    </citation>
    <scope>REVIEW</scope>
</reference>
<reference key="12">
    <citation type="journal article" date="2004" name="Cytokine Growth Factor Rev.">
        <title>Insight into the physiological functions of PDGF through genetic studies in mice.</title>
        <authorList>
            <person name="Betsholtz C."/>
        </authorList>
    </citation>
    <scope>REVIEW ON FUNCTION</scope>
    <scope>DISRUPTION PHENOTYPE</scope>
</reference>
<reference key="13">
    <citation type="journal article" date="2008" name="PLoS ONE">
        <title>Comprehensive dissection of PDGF-PDGFR signaling pathways in PDGFR genetically defined cells.</title>
        <authorList>
            <person name="Wu E."/>
            <person name="Palmer N."/>
            <person name="Tian Z."/>
            <person name="Moseman A.P."/>
            <person name="Galdzicki M."/>
            <person name="Wang X."/>
            <person name="Berger B."/>
            <person name="Zhang H."/>
            <person name="Kohane I.S."/>
        </authorList>
    </citation>
    <scope>FUNCTION</scope>
</reference>
<dbReference type="EMBL" id="S66873">
    <property type="protein sequence ID" value="AAB28740.2"/>
    <property type="molecule type" value="Genomic_DNA"/>
</dbReference>
<dbReference type="EMBL" id="S66868">
    <property type="protein sequence ID" value="AAB28740.2"/>
    <property type="status" value="JOINED"/>
    <property type="molecule type" value="Genomic_DNA"/>
</dbReference>
<dbReference type="EMBL" id="S66869">
    <property type="protein sequence ID" value="AAB28740.2"/>
    <property type="status" value="JOINED"/>
    <property type="molecule type" value="Genomic_DNA"/>
</dbReference>
<dbReference type="EMBL" id="S66870">
    <property type="protein sequence ID" value="AAB28740.2"/>
    <property type="status" value="JOINED"/>
    <property type="molecule type" value="Genomic_DNA"/>
</dbReference>
<dbReference type="EMBL" id="S66871">
    <property type="protein sequence ID" value="AAB28740.2"/>
    <property type="status" value="JOINED"/>
    <property type="molecule type" value="Genomic_DNA"/>
</dbReference>
<dbReference type="EMBL" id="S66872">
    <property type="protein sequence ID" value="AAB28740.2"/>
    <property type="status" value="JOINED"/>
    <property type="molecule type" value="Genomic_DNA"/>
</dbReference>
<dbReference type="EMBL" id="S66874">
    <property type="protein sequence ID" value="AAB28741.2"/>
    <property type="molecule type" value="Genomic_DNA"/>
</dbReference>
<dbReference type="EMBL" id="S66868">
    <property type="protein sequence ID" value="AAB28741.2"/>
    <property type="status" value="JOINED"/>
    <property type="molecule type" value="Genomic_DNA"/>
</dbReference>
<dbReference type="EMBL" id="S66869">
    <property type="protein sequence ID" value="AAB28741.2"/>
    <property type="status" value="JOINED"/>
    <property type="molecule type" value="Genomic_DNA"/>
</dbReference>
<dbReference type="EMBL" id="S66870">
    <property type="protein sequence ID" value="AAB28741.2"/>
    <property type="status" value="JOINED"/>
    <property type="molecule type" value="Genomic_DNA"/>
</dbReference>
<dbReference type="EMBL" id="S66871">
    <property type="protein sequence ID" value="AAB28741.2"/>
    <property type="status" value="JOINED"/>
    <property type="molecule type" value="Genomic_DNA"/>
</dbReference>
<dbReference type="EMBL" id="S66872">
    <property type="protein sequence ID" value="AAB28741.2"/>
    <property type="status" value="JOINED"/>
    <property type="molecule type" value="Genomic_DNA"/>
</dbReference>
<dbReference type="EMBL" id="M29464">
    <property type="protein sequence ID" value="AAA39903.1"/>
    <property type="molecule type" value="mRNA"/>
</dbReference>
<dbReference type="EMBL" id="MU069430">
    <property type="status" value="NOT_ANNOTATED_CDS"/>
    <property type="molecule type" value="Genomic_DNA"/>
</dbReference>
<dbReference type="CCDS" id="CCDS19802.1">
    <molecule id="P20033-2"/>
</dbReference>
<dbReference type="CCDS" id="CCDS90003.1">
    <molecule id="P20033-1"/>
</dbReference>
<dbReference type="PIR" id="A37359">
    <property type="entry name" value="A37359"/>
</dbReference>
<dbReference type="RefSeq" id="NP_001350200.1">
    <molecule id="P20033-1"/>
    <property type="nucleotide sequence ID" value="NM_001363271.2"/>
</dbReference>
<dbReference type="RefSeq" id="NP_001409065.1">
    <molecule id="P20033-1"/>
    <property type="nucleotide sequence ID" value="NM_001422136.1"/>
</dbReference>
<dbReference type="RefSeq" id="NP_001409068.1">
    <molecule id="P20033-2"/>
    <property type="nucleotide sequence ID" value="NM_001422139.1"/>
</dbReference>
<dbReference type="RefSeq" id="NP_001409069.1">
    <molecule id="P20033-2"/>
    <property type="nucleotide sequence ID" value="NM_001422140.1"/>
</dbReference>
<dbReference type="RefSeq" id="NP_032834.1">
    <molecule id="P20033-2"/>
    <property type="nucleotide sequence ID" value="NM_008808.5"/>
</dbReference>
<dbReference type="RefSeq" id="XP_006504722.1">
    <property type="nucleotide sequence ID" value="XM_006504659.3"/>
</dbReference>
<dbReference type="RefSeq" id="XP_011239273.1">
    <molecule id="P20033-1"/>
    <property type="nucleotide sequence ID" value="XM_011240971.4"/>
</dbReference>
<dbReference type="RefSeq" id="XP_036020763.1">
    <molecule id="P20033-1"/>
    <property type="nucleotide sequence ID" value="XM_036164870.1"/>
</dbReference>
<dbReference type="SMR" id="P20033"/>
<dbReference type="ComplexPortal" id="CPX-2893">
    <property type="entry name" value="Platelet-derived growth factor AA complex"/>
</dbReference>
<dbReference type="ComplexPortal" id="CPX-2899">
    <property type="entry name" value="PDGF receptor alpha - PDGF-AA complex"/>
</dbReference>
<dbReference type="ComplexPortal" id="CPX-2900">
    <property type="entry name" value="Platelet-derived growth factor AB complex"/>
</dbReference>
<dbReference type="ComplexPortal" id="CPX-2901">
    <property type="entry name" value="PDGF receptor alpha - PDGF-AB complex"/>
</dbReference>
<dbReference type="ComplexPortal" id="CPX-2903">
    <property type="entry name" value="PDGF receptor alpha-beta - PDGF-AB complex"/>
</dbReference>
<dbReference type="ComplexPortal" id="CPX-2904">
    <property type="entry name" value="PDGF receptor beta - PDGF-AB complex"/>
</dbReference>
<dbReference type="FunCoup" id="P20033">
    <property type="interactions" value="957"/>
</dbReference>
<dbReference type="STRING" id="10090.ENSMUSP00000075463"/>
<dbReference type="GlyCosmos" id="P20033">
    <property type="glycosylation" value="1 site, No reported glycans"/>
</dbReference>
<dbReference type="GlyGen" id="P20033">
    <property type="glycosylation" value="1 site"/>
</dbReference>
<dbReference type="PhosphoSitePlus" id="P20033"/>
<dbReference type="PaxDb" id="10090-ENSMUSP00000075463"/>
<dbReference type="PeptideAtlas" id="P20033"/>
<dbReference type="ProteomicsDB" id="294043">
    <molecule id="P20033-1"/>
</dbReference>
<dbReference type="ProteomicsDB" id="294044">
    <molecule id="P20033-2"/>
</dbReference>
<dbReference type="DNASU" id="18590"/>
<dbReference type="Ensembl" id="ENSMUST00000046901.14">
    <molecule id="P20033-1"/>
    <property type="protein sequence ID" value="ENSMUSP00000038870.7"/>
    <property type="gene ID" value="ENSMUSG00000025856.16"/>
</dbReference>
<dbReference type="Ensembl" id="ENSMUST00000076095.14">
    <molecule id="P20033-2"/>
    <property type="protein sequence ID" value="ENSMUSP00000075463.8"/>
    <property type="gene ID" value="ENSMUSG00000025856.16"/>
</dbReference>
<dbReference type="Ensembl" id="ENSMUST00000110896.2">
    <molecule id="P20033-2"/>
    <property type="protein sequence ID" value="ENSMUSP00000106521.2"/>
    <property type="gene ID" value="ENSMUSG00000025856.16"/>
</dbReference>
<dbReference type="Ensembl" id="ENSMUST00000110897.8">
    <molecule id="P20033-2"/>
    <property type="protein sequence ID" value="ENSMUSP00000106522.2"/>
    <property type="gene ID" value="ENSMUSG00000025856.16"/>
</dbReference>
<dbReference type="GeneID" id="18590"/>
<dbReference type="KEGG" id="mmu:18590"/>
<dbReference type="AGR" id="MGI:97527"/>
<dbReference type="CTD" id="5154"/>
<dbReference type="MGI" id="MGI:97527">
    <property type="gene designation" value="Pdgfa"/>
</dbReference>
<dbReference type="eggNOG" id="ENOG502QVAU">
    <property type="taxonomic scope" value="Eukaryota"/>
</dbReference>
<dbReference type="GeneTree" id="ENSGT00940000159039"/>
<dbReference type="InParanoid" id="P20033"/>
<dbReference type="OMA" id="NSEYREH"/>
<dbReference type="OrthoDB" id="8878063at2759"/>
<dbReference type="PhylomeDB" id="P20033"/>
<dbReference type="Reactome" id="R-MMU-114608">
    <property type="pathway name" value="Platelet degranulation"/>
</dbReference>
<dbReference type="Reactome" id="R-MMU-1257604">
    <property type="pathway name" value="PIP3 activates AKT signaling"/>
</dbReference>
<dbReference type="Reactome" id="R-MMU-186763">
    <property type="pathway name" value="Downstream signal transduction"/>
</dbReference>
<dbReference type="Reactome" id="R-MMU-186797">
    <property type="pathway name" value="Signaling by PDGF"/>
</dbReference>
<dbReference type="Reactome" id="R-MMU-5673001">
    <property type="pathway name" value="RAF/MAP kinase cascade"/>
</dbReference>
<dbReference type="Reactome" id="R-MMU-6811558">
    <property type="pathway name" value="PI5P, PP2A and IER3 Regulate PI3K/AKT Signaling"/>
</dbReference>
<dbReference type="BioGRID-ORCS" id="18590">
    <property type="hits" value="3 hits in 79 CRISPR screens"/>
</dbReference>
<dbReference type="ChiTaRS" id="Pdgfa">
    <property type="organism name" value="mouse"/>
</dbReference>
<dbReference type="PRO" id="PR:P20033"/>
<dbReference type="Proteomes" id="UP000000589">
    <property type="component" value="Chromosome 5"/>
</dbReference>
<dbReference type="RNAct" id="P20033">
    <property type="molecule type" value="protein"/>
</dbReference>
<dbReference type="GO" id="GO:0009986">
    <property type="term" value="C:cell surface"/>
    <property type="evidence" value="ECO:0000250"/>
    <property type="project" value="UniProtKB"/>
</dbReference>
<dbReference type="GO" id="GO:0005615">
    <property type="term" value="C:extracellular space"/>
    <property type="evidence" value="ECO:0000314"/>
    <property type="project" value="BHF-UCL"/>
</dbReference>
<dbReference type="GO" id="GO:0005902">
    <property type="term" value="C:microvillus"/>
    <property type="evidence" value="ECO:0000314"/>
    <property type="project" value="MGI"/>
</dbReference>
<dbReference type="GO" id="GO:1990265">
    <property type="term" value="C:platelet-derived growth factor complex"/>
    <property type="evidence" value="ECO:0000266"/>
    <property type="project" value="ComplexPortal"/>
</dbReference>
<dbReference type="GO" id="GO:1990270">
    <property type="term" value="C:platelet-derived growth factor receptor-ligand complex"/>
    <property type="evidence" value="ECO:0007669"/>
    <property type="project" value="Ensembl"/>
</dbReference>
<dbReference type="GO" id="GO:0005518">
    <property type="term" value="F:collagen binding"/>
    <property type="evidence" value="ECO:0000250"/>
    <property type="project" value="UniProtKB"/>
</dbReference>
<dbReference type="GO" id="GO:0008083">
    <property type="term" value="F:growth factor activity"/>
    <property type="evidence" value="ECO:0000250"/>
    <property type="project" value="UniProtKB"/>
</dbReference>
<dbReference type="GO" id="GO:0048407">
    <property type="term" value="F:platelet-derived growth factor binding"/>
    <property type="evidence" value="ECO:0007669"/>
    <property type="project" value="Ensembl"/>
</dbReference>
<dbReference type="GO" id="GO:0005161">
    <property type="term" value="F:platelet-derived growth factor receptor binding"/>
    <property type="evidence" value="ECO:0000250"/>
    <property type="project" value="UniProtKB"/>
</dbReference>
<dbReference type="GO" id="GO:0046982">
    <property type="term" value="F:protein heterodimerization activity"/>
    <property type="evidence" value="ECO:0007669"/>
    <property type="project" value="Ensembl"/>
</dbReference>
<dbReference type="GO" id="GO:0042803">
    <property type="term" value="F:protein homodimerization activity"/>
    <property type="evidence" value="ECO:0000250"/>
    <property type="project" value="UniProtKB"/>
</dbReference>
<dbReference type="GO" id="GO:0030036">
    <property type="term" value="P:actin cytoskeleton organization"/>
    <property type="evidence" value="ECO:0000314"/>
    <property type="project" value="MGI"/>
</dbReference>
<dbReference type="GO" id="GO:0001525">
    <property type="term" value="P:angiogenesis"/>
    <property type="evidence" value="ECO:0000314"/>
    <property type="project" value="MGI"/>
</dbReference>
<dbReference type="GO" id="GO:0009887">
    <property type="term" value="P:animal organ morphogenesis"/>
    <property type="evidence" value="ECO:0000315"/>
    <property type="project" value="MGI"/>
</dbReference>
<dbReference type="GO" id="GO:0060348">
    <property type="term" value="P:bone development"/>
    <property type="evidence" value="ECO:0000316"/>
    <property type="project" value="MGI"/>
</dbReference>
<dbReference type="GO" id="GO:0008283">
    <property type="term" value="P:cell population proliferation"/>
    <property type="evidence" value="ECO:0000315"/>
    <property type="project" value="MGI"/>
</dbReference>
<dbReference type="GO" id="GO:0030031">
    <property type="term" value="P:cell projection assembly"/>
    <property type="evidence" value="ECO:0000314"/>
    <property type="project" value="MGI"/>
</dbReference>
<dbReference type="GO" id="GO:0048565">
    <property type="term" value="P:digestive tract development"/>
    <property type="evidence" value="ECO:0000315"/>
    <property type="project" value="UniProtKB"/>
</dbReference>
<dbReference type="GO" id="GO:1990401">
    <property type="term" value="P:embryonic lung development"/>
    <property type="evidence" value="ECO:0000315"/>
    <property type="project" value="BHF-UCL"/>
</dbReference>
<dbReference type="GO" id="GO:0001942">
    <property type="term" value="P:hair follicle development"/>
    <property type="evidence" value="ECO:0000315"/>
    <property type="project" value="MGI"/>
</dbReference>
<dbReference type="GO" id="GO:0048286">
    <property type="term" value="P:lung alveolus development"/>
    <property type="evidence" value="ECO:0000315"/>
    <property type="project" value="UniProtKB"/>
</dbReference>
<dbReference type="GO" id="GO:0050919">
    <property type="term" value="P:negative chemotaxis"/>
    <property type="evidence" value="ECO:0000250"/>
    <property type="project" value="UniProtKB"/>
</dbReference>
<dbReference type="GO" id="GO:0010512">
    <property type="term" value="P:negative regulation of phosphatidylinositol biosynthetic process"/>
    <property type="evidence" value="ECO:0000250"/>
    <property type="project" value="UniProtKB"/>
</dbReference>
<dbReference type="GO" id="GO:0010544">
    <property type="term" value="P:negative regulation of platelet activation"/>
    <property type="evidence" value="ECO:0000250"/>
    <property type="project" value="UniProtKB"/>
</dbReference>
<dbReference type="GO" id="GO:0048008">
    <property type="term" value="P:platelet-derived growth factor receptor signaling pathway"/>
    <property type="evidence" value="ECO:0000250"/>
    <property type="project" value="UniProtKB"/>
</dbReference>
<dbReference type="GO" id="GO:0035790">
    <property type="term" value="P:platelet-derived growth factor receptor-alpha signaling pathway"/>
    <property type="evidence" value="ECO:0000303"/>
    <property type="project" value="ComplexPortal"/>
</dbReference>
<dbReference type="GO" id="GO:0051781">
    <property type="term" value="P:positive regulation of cell division"/>
    <property type="evidence" value="ECO:0007669"/>
    <property type="project" value="UniProtKB-KW"/>
</dbReference>
<dbReference type="GO" id="GO:0030335">
    <property type="term" value="P:positive regulation of cell migration"/>
    <property type="evidence" value="ECO:0000250"/>
    <property type="project" value="UniProtKB"/>
</dbReference>
<dbReference type="GO" id="GO:0008284">
    <property type="term" value="P:positive regulation of cell population proliferation"/>
    <property type="evidence" value="ECO:0000315"/>
    <property type="project" value="MGI"/>
</dbReference>
<dbReference type="GO" id="GO:0070374">
    <property type="term" value="P:positive regulation of ERK1 and ERK2 cascade"/>
    <property type="evidence" value="ECO:0000250"/>
    <property type="project" value="UniProtKB"/>
</dbReference>
<dbReference type="GO" id="GO:0048146">
    <property type="term" value="P:positive regulation of fibroblast proliferation"/>
    <property type="evidence" value="ECO:0000250"/>
    <property type="project" value="UniProtKB"/>
</dbReference>
<dbReference type="GO" id="GO:0043410">
    <property type="term" value="P:positive regulation of MAPK cascade"/>
    <property type="evidence" value="ECO:0000250"/>
    <property type="project" value="UniProtKB"/>
</dbReference>
<dbReference type="GO" id="GO:0002053">
    <property type="term" value="P:positive regulation of mesenchymal cell proliferation"/>
    <property type="evidence" value="ECO:0000315"/>
    <property type="project" value="MGI"/>
</dbReference>
<dbReference type="GO" id="GO:0035793">
    <property type="term" value="P:positive regulation of metanephric mesenchymal cell migration by platelet-derived growth factor receptor-beta signaling pathway"/>
    <property type="evidence" value="ECO:0000250"/>
    <property type="project" value="UniProtKB"/>
</dbReference>
<dbReference type="GO" id="GO:0051897">
    <property type="term" value="P:positive regulation of phosphatidylinositol 3-kinase/protein kinase B signal transduction"/>
    <property type="evidence" value="ECO:0000250"/>
    <property type="project" value="UniProtKB"/>
</dbReference>
<dbReference type="GO" id="GO:0031954">
    <property type="term" value="P:positive regulation of protein autophosphorylation"/>
    <property type="evidence" value="ECO:0000250"/>
    <property type="project" value="UniProtKB"/>
</dbReference>
<dbReference type="GO" id="GO:0060683">
    <property type="term" value="P:regulation of branching involved in salivary gland morphogenesis by epithelial-mesenchymal signaling"/>
    <property type="evidence" value="ECO:0000315"/>
    <property type="project" value="MGI"/>
</dbReference>
<dbReference type="GO" id="GO:0014910">
    <property type="term" value="P:regulation of smooth muscle cell migration"/>
    <property type="evidence" value="ECO:0000250"/>
    <property type="project" value="UniProtKB"/>
</dbReference>
<dbReference type="GO" id="GO:0009611">
    <property type="term" value="P:response to wounding"/>
    <property type="evidence" value="ECO:0000250"/>
    <property type="project" value="UniProtKB"/>
</dbReference>
<dbReference type="GO" id="GO:0043588">
    <property type="term" value="P:skin development"/>
    <property type="evidence" value="ECO:0000315"/>
    <property type="project" value="MGI"/>
</dbReference>
<dbReference type="CDD" id="cd00135">
    <property type="entry name" value="PDGF"/>
    <property type="match status" value="1"/>
</dbReference>
<dbReference type="FunFam" id="2.10.90.10:FF:000017">
    <property type="entry name" value="Platelet derived growth factor subunit A"/>
    <property type="match status" value="1"/>
</dbReference>
<dbReference type="Gene3D" id="2.10.90.10">
    <property type="entry name" value="Cystine-knot cytokines"/>
    <property type="match status" value="1"/>
</dbReference>
<dbReference type="InterPro" id="IPR029034">
    <property type="entry name" value="Cystine-knot_cytokine"/>
</dbReference>
<dbReference type="InterPro" id="IPR023581">
    <property type="entry name" value="PD_growth_factor_CS"/>
</dbReference>
<dbReference type="InterPro" id="IPR000072">
    <property type="entry name" value="PDGF/VEGF_dom"/>
</dbReference>
<dbReference type="InterPro" id="IPR006782">
    <property type="entry name" value="PDGF_N"/>
</dbReference>
<dbReference type="PANTHER" id="PTHR11633">
    <property type="entry name" value="PLATELET-DERIVED GROWTH FACTOR"/>
    <property type="match status" value="1"/>
</dbReference>
<dbReference type="PANTHER" id="PTHR11633:SF3">
    <property type="entry name" value="PLATELET-DERIVED GROWTH FACTOR SUBUNIT A"/>
    <property type="match status" value="1"/>
</dbReference>
<dbReference type="Pfam" id="PF00341">
    <property type="entry name" value="PDGF"/>
    <property type="match status" value="1"/>
</dbReference>
<dbReference type="Pfam" id="PF04692">
    <property type="entry name" value="PDGF_N"/>
    <property type="match status" value="1"/>
</dbReference>
<dbReference type="SMART" id="SM00141">
    <property type="entry name" value="PDGF"/>
    <property type="match status" value="1"/>
</dbReference>
<dbReference type="SUPFAM" id="SSF57501">
    <property type="entry name" value="Cystine-knot cytokines"/>
    <property type="match status" value="1"/>
</dbReference>
<dbReference type="PROSITE" id="PS00249">
    <property type="entry name" value="PDGF_1"/>
    <property type="match status" value="1"/>
</dbReference>
<dbReference type="PROSITE" id="PS50278">
    <property type="entry name" value="PDGF_2"/>
    <property type="match status" value="1"/>
</dbReference>
<gene>
    <name type="primary">Pdgfa</name>
</gene>
<feature type="signal peptide">
    <location>
        <begin position="1"/>
        <end position="20"/>
    </location>
</feature>
<feature type="propeptide" id="PRO_0000023358" description="Removed in mature form">
    <location>
        <begin position="21"/>
        <end position="86"/>
    </location>
</feature>
<feature type="chain" id="PRO_0000023359" description="Platelet-derived growth factor subunit A">
    <location>
        <begin position="87"/>
        <end position="211"/>
    </location>
</feature>
<feature type="region of interest" description="Receptor binding site" evidence="2">
    <location>
        <begin position="158"/>
        <end position="162"/>
    </location>
</feature>
<feature type="region of interest" description="Disordered" evidence="3">
    <location>
        <begin position="186"/>
        <end position="211"/>
    </location>
</feature>
<feature type="compositionally biased region" description="Basic and acidic residues" evidence="3">
    <location>
        <begin position="186"/>
        <end position="197"/>
    </location>
</feature>
<feature type="compositionally biased region" description="Basic residues" evidence="3">
    <location>
        <begin position="198"/>
        <end position="211"/>
    </location>
</feature>
<feature type="glycosylation site" description="N-linked (GlcNAc...) asparagine" evidence="2">
    <location>
        <position position="134"/>
    </location>
</feature>
<feature type="disulfide bond" evidence="1">
    <location>
        <begin position="96"/>
        <end position="140"/>
    </location>
</feature>
<feature type="disulfide bond" description="Interchain" evidence="1">
    <location>
        <position position="123"/>
    </location>
</feature>
<feature type="disulfide bond" evidence="1">
    <location>
        <begin position="129"/>
        <end position="177"/>
    </location>
</feature>
<feature type="disulfide bond" description="Interchain" evidence="1">
    <location>
        <position position="132"/>
    </location>
</feature>
<feature type="disulfide bond" evidence="1">
    <location>
        <begin position="133"/>
        <end position="179"/>
    </location>
</feature>
<feature type="splice variant" id="VSP_004604" description="In isoform Short." evidence="13 14">
    <original>GRR</original>
    <variation>DVR</variation>
    <location>
        <begin position="194"/>
        <end position="196"/>
    </location>
</feature>
<feature type="splice variant" id="VSP_004605" description="In isoform Short." evidence="13 14">
    <location>
        <begin position="197"/>
        <end position="211"/>
    </location>
</feature>
<feature type="sequence conflict" description="In Ref. 1; AAB28740/AAB28741." evidence="15" ref="1">
    <original>I</original>
    <variation>V</variation>
    <location>
        <position position="92"/>
    </location>
</feature>
<feature type="sequence conflict" description="In Ref. 1; AAB28740/AAB28741." evidence="15" ref="1">
    <original>H</original>
    <variation>D</variation>
    <location>
        <position position="174"/>
    </location>
</feature>
<feature type="sequence conflict" description="In Ref. 1; AAB28740." evidence="15" ref="1">
    <original>K</original>
    <variation>N</variation>
    <location>
        <position position="202"/>
    </location>
</feature>
<sequence length="211" mass="24130">MRTWACLLLLGCGYLAHALAEEAEIPRELIERLARSQIHSIRDLQRLLEIDSVGAEDALETSLRAHGSHAINHVPEKRPVPIRRKRSIEEAIPAVCKTRTVIYEIPRSQVDPTSANFLIWPPCVEVKRCTGCCNTSSVKCQPSRVHHRSVKVAKVEYVRKKPKLKEVQVRLEEHLECACATSNLNPDHREEETGRRRESGKKRKRKRLKPT</sequence>
<accession>P20033</accession>